<accession>P0A3L5</accession>
<accession>P04380</accession>
<geneLocation type="plasmid">
    <name>pTiC58</name>
</geneLocation>
<evidence type="ECO:0000250" key="1"/>
<evidence type="ECO:0000305" key="2"/>
<gene>
    <name type="primary">izt</name>
    <name type="synonym">ipt</name>
    <name type="synonym">tmr</name>
    <name type="ordered locus">Atu6012</name>
    <name type="ORF">AGR_pTi_50</name>
</gene>
<feature type="chain" id="PRO_0000216432" description="Adenylate dimethylallyltransferase">
    <location>
        <begin position="1"/>
        <end position="240"/>
    </location>
</feature>
<proteinExistence type="inferred from homology"/>
<dbReference type="EC" id="2.5.1.27"/>
<dbReference type="EMBL" id="AE007871">
    <property type="protein sequence ID" value="AAK90970.2"/>
    <property type="molecule type" value="Genomic_DNA"/>
</dbReference>
<dbReference type="PIR" id="AB3229">
    <property type="entry name" value="AB3229"/>
</dbReference>
<dbReference type="RefSeq" id="NP_396529.2">
    <property type="nucleotide sequence ID" value="NC_003065.3"/>
</dbReference>
<dbReference type="RefSeq" id="WP_010891460.1">
    <property type="nucleotide sequence ID" value="NC_003065.3"/>
</dbReference>
<dbReference type="SMR" id="P0A3L5"/>
<dbReference type="EnsemblBacteria" id="AAK90970">
    <property type="protein sequence ID" value="AAK90970"/>
    <property type="gene ID" value="Atu6012"/>
</dbReference>
<dbReference type="GeneID" id="1137335"/>
<dbReference type="GeneID" id="92775077"/>
<dbReference type="KEGG" id="atu:Atu6012"/>
<dbReference type="HOGENOM" id="CLU_1115409_0_0_5"/>
<dbReference type="OrthoDB" id="8293568at2"/>
<dbReference type="BioCyc" id="AGRO:ATU6012-MONOMER"/>
<dbReference type="Proteomes" id="UP000000813">
    <property type="component" value="Plasmid Ti"/>
</dbReference>
<dbReference type="GO" id="GO:0009824">
    <property type="term" value="F:AMP dimethylallyltransferase activity"/>
    <property type="evidence" value="ECO:0007669"/>
    <property type="project" value="UniProtKB-EC"/>
</dbReference>
<dbReference type="GO" id="GO:0009691">
    <property type="term" value="P:cytokinin biosynthetic process"/>
    <property type="evidence" value="ECO:0007669"/>
    <property type="project" value="UniProtKB-KW"/>
</dbReference>
<dbReference type="Gene3D" id="1.10.287.890">
    <property type="entry name" value="Crystal structure of tRNA isopentenylpyrophosphate transferase (bh2366) domain"/>
    <property type="match status" value="1"/>
</dbReference>
<dbReference type="Gene3D" id="3.40.50.300">
    <property type="entry name" value="P-loop containing nucleotide triphosphate hydrolases"/>
    <property type="match status" value="1"/>
</dbReference>
<dbReference type="InterPro" id="IPR027417">
    <property type="entry name" value="P-loop_NTPase"/>
</dbReference>
<dbReference type="InterPro" id="IPR002648">
    <property type="entry name" value="Tzs"/>
</dbReference>
<dbReference type="Pfam" id="PF01745">
    <property type="entry name" value="IPT"/>
    <property type="match status" value="1"/>
</dbReference>
<dbReference type="PIRSF" id="PIRSF000507">
    <property type="entry name" value="IPT"/>
    <property type="match status" value="1"/>
</dbReference>
<dbReference type="SUPFAM" id="SSF52540">
    <property type="entry name" value="P-loop containing nucleoside triphosphate hydrolases"/>
    <property type="match status" value="1"/>
</dbReference>
<reference key="1">
    <citation type="journal article" date="2001" name="Science">
        <title>The genome of the natural genetic engineer Agrobacterium tumefaciens C58.</title>
        <authorList>
            <person name="Wood D.W."/>
            <person name="Setubal J.C."/>
            <person name="Kaul R."/>
            <person name="Monks D.E."/>
            <person name="Kitajima J.P."/>
            <person name="Okura V.K."/>
            <person name="Zhou Y."/>
            <person name="Chen L."/>
            <person name="Wood G.E."/>
            <person name="Almeida N.F. Jr."/>
            <person name="Woo L."/>
            <person name="Chen Y."/>
            <person name="Paulsen I.T."/>
            <person name="Eisen J.A."/>
            <person name="Karp P.D."/>
            <person name="Bovee D. Sr."/>
            <person name="Chapman P."/>
            <person name="Clendenning J."/>
            <person name="Deatherage G."/>
            <person name="Gillet W."/>
            <person name="Grant C."/>
            <person name="Kutyavin T."/>
            <person name="Levy R."/>
            <person name="Li M.-J."/>
            <person name="McClelland E."/>
            <person name="Palmieri A."/>
            <person name="Raymond C."/>
            <person name="Rouse G."/>
            <person name="Saenphimmachak C."/>
            <person name="Wu Z."/>
            <person name="Romero P."/>
            <person name="Gordon D."/>
            <person name="Zhang S."/>
            <person name="Yoo H."/>
            <person name="Tao Y."/>
            <person name="Biddle P."/>
            <person name="Jung M."/>
            <person name="Krespan W."/>
            <person name="Perry M."/>
            <person name="Gordon-Kamm B."/>
            <person name="Liao L."/>
            <person name="Kim S."/>
            <person name="Hendrick C."/>
            <person name="Zhao Z.-Y."/>
            <person name="Dolan M."/>
            <person name="Chumley F."/>
            <person name="Tingey S.V."/>
            <person name="Tomb J.-F."/>
            <person name="Gordon M.P."/>
            <person name="Olson M.V."/>
            <person name="Nester E.W."/>
        </authorList>
    </citation>
    <scope>NUCLEOTIDE SEQUENCE [LARGE SCALE GENOMIC DNA]</scope>
</reference>
<reference key="2">
    <citation type="journal article" date="2001" name="Science">
        <title>Genome sequence of the plant pathogen and biotechnology agent Agrobacterium tumefaciens C58.</title>
        <authorList>
            <person name="Goodner B."/>
            <person name="Hinkle G."/>
            <person name="Gattung S."/>
            <person name="Miller N."/>
            <person name="Blanchard M."/>
            <person name="Qurollo B."/>
            <person name="Goldman B.S."/>
            <person name="Cao Y."/>
            <person name="Askenazi M."/>
            <person name="Halling C."/>
            <person name="Mullin L."/>
            <person name="Houmiel K."/>
            <person name="Gordon J."/>
            <person name="Vaudin M."/>
            <person name="Iartchouk O."/>
            <person name="Epp A."/>
            <person name="Liu F."/>
            <person name="Wollam C."/>
            <person name="Allinger M."/>
            <person name="Doughty D."/>
            <person name="Scott C."/>
            <person name="Lappas C."/>
            <person name="Markelz B."/>
            <person name="Flanagan C."/>
            <person name="Crowell C."/>
            <person name="Gurson J."/>
            <person name="Lomo C."/>
            <person name="Sear C."/>
            <person name="Strub G."/>
            <person name="Cielo C."/>
            <person name="Slater S."/>
        </authorList>
    </citation>
    <scope>NUCLEOTIDE SEQUENCE [LARGE SCALE GENOMIC DNA]</scope>
    <source>
        <strain>C58 / ATCC 33970</strain>
    </source>
</reference>
<sequence length="240" mass="27025">MDLRLIFGPTCTGKTSTAVALAQQTGLPVLSLDRVQCCPQLSTGSGRPTVEELKGTSRLYLDDRPLVKGIIAAKQAHERLMGEVYNYEAHGGLILEGGSISLLKCMAQSSYWSADFRWHIIRHELADEETFMNVAKARVKQMLRPAAGLSIIQELVDLWKEPRLRPILKEIDGYRYAMLFASQNQITSDMLLQLDADMEDKLIHGIAQEYLIHARRQEQKFPRVNAAAYDGFEGHPFGMY</sequence>
<comment type="function">
    <text evidence="1">Transfers dimethylallyl groups to AMP as part of the biosynthesis of cytokinin phytohormones.</text>
</comment>
<comment type="catalytic activity">
    <reaction>
        <text>dimethylallyl diphosphate + AMP = N(6)-(dimethylallyl)adenosine 5'-phosphate + diphosphate</text>
        <dbReference type="Rhea" id="RHEA:15285"/>
        <dbReference type="ChEBI" id="CHEBI:33019"/>
        <dbReference type="ChEBI" id="CHEBI:57526"/>
        <dbReference type="ChEBI" id="CHEBI:57623"/>
        <dbReference type="ChEBI" id="CHEBI:456215"/>
        <dbReference type="EC" id="2.5.1.27"/>
    </reaction>
</comment>
<comment type="similarity">
    <text evidence="2">Belongs to the isopentenyl transferase family.</text>
</comment>
<name>IPT_AGRFC</name>
<keyword id="KW-0192">Crown gall tumor</keyword>
<keyword id="KW-0203">Cytokinin biosynthesis</keyword>
<keyword id="KW-0614">Plasmid</keyword>
<keyword id="KW-1185">Reference proteome</keyword>
<keyword id="KW-0808">Transferase</keyword>
<protein>
    <recommendedName>
        <fullName>Adenylate dimethylallyltransferase</fullName>
        <ecNumber>2.5.1.27</ecNumber>
    </recommendedName>
    <alternativeName>
        <fullName>Dimethylallyl transferase</fullName>
    </alternativeName>
    <alternativeName>
        <fullName>Isopentenyl transferase</fullName>
    </alternativeName>
</protein>
<organism>
    <name type="scientific">Agrobacterium fabrum (strain C58 / ATCC 33970)</name>
    <name type="common">Agrobacterium tumefaciens (strain C58)</name>
    <dbReference type="NCBI Taxonomy" id="176299"/>
    <lineage>
        <taxon>Bacteria</taxon>
        <taxon>Pseudomonadati</taxon>
        <taxon>Pseudomonadota</taxon>
        <taxon>Alphaproteobacteria</taxon>
        <taxon>Hyphomicrobiales</taxon>
        <taxon>Rhizobiaceae</taxon>
        <taxon>Rhizobium/Agrobacterium group</taxon>
        <taxon>Agrobacterium</taxon>
        <taxon>Agrobacterium tumefaciens complex</taxon>
    </lineage>
</organism>